<organism>
    <name type="scientific">Frankia casuarinae (strain DSM 45818 / CECT 9043 / HFP020203 / CcI3)</name>
    <dbReference type="NCBI Taxonomy" id="106370"/>
    <lineage>
        <taxon>Bacteria</taxon>
        <taxon>Bacillati</taxon>
        <taxon>Actinomycetota</taxon>
        <taxon>Actinomycetes</taxon>
        <taxon>Frankiales</taxon>
        <taxon>Frankiaceae</taxon>
        <taxon>Frankia</taxon>
    </lineage>
</organism>
<name>SYC_FRACC</name>
<evidence type="ECO:0000255" key="1">
    <source>
        <dbReference type="HAMAP-Rule" id="MF_00041"/>
    </source>
</evidence>
<evidence type="ECO:0000256" key="2">
    <source>
        <dbReference type="SAM" id="MobiDB-lite"/>
    </source>
</evidence>
<sequence length="524" mass="56133">MGLHLYDTRRRRVRPFEPLRPGHVGVYVCGPTVQAAPHVGHIRTALPFDLLRRWLVQSGRSVTFVQNVTDIDDKIIINADRDGTSVWELATRQTRAFDDAYRTLGILPPTIQPRATGHIPEMIALVSALVEGGYAYASGGSVWFRVGAFADYGALSHQRPDAMQPSVEAEPGKADPRDFALWKAARPGEPFWSSPWGDGRPGWHLECSAMAGKYLGPVFDIHGGGLDLVFPHHENERAQTVCAATARPASNAASADSPGPGGGEPGGGEPSSGEMARYWMHVGLLTTGGTKMSKSLGNSVLVADALDAVRPQVLRYHLLSAHYRSTLEYSAEALAESTAAHDRVETFVRNALDILGGPGEAAALAADEVVSSVAGAQPTVAGARPVPVPGPGGESRLTPRRAWSDFTIAMDDDLAVGRALAALFGAVSQGNQVLSKAHSRELAGWVDVTRRMLNIFGLDPHEQWPTAGAEFRPALDGAMQVVLDLRSAARARRDYAEADAIRSRLAAAGLIVEDTPEGQRWHLA</sequence>
<feature type="chain" id="PRO_0000240915" description="Cysteine--tRNA ligase">
    <location>
        <begin position="1"/>
        <end position="524"/>
    </location>
</feature>
<feature type="region of interest" description="Disordered" evidence="2">
    <location>
        <begin position="246"/>
        <end position="273"/>
    </location>
</feature>
<feature type="short sequence motif" description="'HIGH' region">
    <location>
        <begin position="31"/>
        <end position="41"/>
    </location>
</feature>
<feature type="short sequence motif" description="'KMSKS' region">
    <location>
        <begin position="291"/>
        <end position="295"/>
    </location>
</feature>
<feature type="compositionally biased region" description="Low complexity" evidence="2">
    <location>
        <begin position="246"/>
        <end position="258"/>
    </location>
</feature>
<feature type="compositionally biased region" description="Gly residues" evidence="2">
    <location>
        <begin position="259"/>
        <end position="270"/>
    </location>
</feature>
<feature type="binding site" evidence="1">
    <location>
        <position position="29"/>
    </location>
    <ligand>
        <name>Zn(2+)</name>
        <dbReference type="ChEBI" id="CHEBI:29105"/>
    </ligand>
</feature>
<feature type="binding site" evidence="1">
    <location>
        <position position="207"/>
    </location>
    <ligand>
        <name>Zn(2+)</name>
        <dbReference type="ChEBI" id="CHEBI:29105"/>
    </ligand>
</feature>
<feature type="binding site" evidence="1">
    <location>
        <position position="232"/>
    </location>
    <ligand>
        <name>Zn(2+)</name>
        <dbReference type="ChEBI" id="CHEBI:29105"/>
    </ligand>
</feature>
<feature type="binding site" evidence="1">
    <location>
        <position position="236"/>
    </location>
    <ligand>
        <name>Zn(2+)</name>
        <dbReference type="ChEBI" id="CHEBI:29105"/>
    </ligand>
</feature>
<feature type="binding site" evidence="1">
    <location>
        <position position="294"/>
    </location>
    <ligand>
        <name>ATP</name>
        <dbReference type="ChEBI" id="CHEBI:30616"/>
    </ligand>
</feature>
<keyword id="KW-0030">Aminoacyl-tRNA synthetase</keyword>
<keyword id="KW-0067">ATP-binding</keyword>
<keyword id="KW-0963">Cytoplasm</keyword>
<keyword id="KW-0436">Ligase</keyword>
<keyword id="KW-0479">Metal-binding</keyword>
<keyword id="KW-0547">Nucleotide-binding</keyword>
<keyword id="KW-0648">Protein biosynthesis</keyword>
<keyword id="KW-1185">Reference proteome</keyword>
<keyword id="KW-0862">Zinc</keyword>
<comment type="catalytic activity">
    <reaction evidence="1">
        <text>tRNA(Cys) + L-cysteine + ATP = L-cysteinyl-tRNA(Cys) + AMP + diphosphate</text>
        <dbReference type="Rhea" id="RHEA:17773"/>
        <dbReference type="Rhea" id="RHEA-COMP:9661"/>
        <dbReference type="Rhea" id="RHEA-COMP:9679"/>
        <dbReference type="ChEBI" id="CHEBI:30616"/>
        <dbReference type="ChEBI" id="CHEBI:33019"/>
        <dbReference type="ChEBI" id="CHEBI:35235"/>
        <dbReference type="ChEBI" id="CHEBI:78442"/>
        <dbReference type="ChEBI" id="CHEBI:78517"/>
        <dbReference type="ChEBI" id="CHEBI:456215"/>
        <dbReference type="EC" id="6.1.1.16"/>
    </reaction>
</comment>
<comment type="cofactor">
    <cofactor evidence="1">
        <name>Zn(2+)</name>
        <dbReference type="ChEBI" id="CHEBI:29105"/>
    </cofactor>
    <text evidence="1">Binds 1 zinc ion per subunit.</text>
</comment>
<comment type="subunit">
    <text evidence="1">Monomer.</text>
</comment>
<comment type="subcellular location">
    <subcellularLocation>
        <location evidence="1">Cytoplasm</location>
    </subcellularLocation>
</comment>
<comment type="similarity">
    <text evidence="1">Belongs to the class-I aminoacyl-tRNA synthetase family.</text>
</comment>
<dbReference type="EC" id="6.1.1.16" evidence="1"/>
<dbReference type="EMBL" id="CP000249">
    <property type="protein sequence ID" value="ABD13597.1"/>
    <property type="molecule type" value="Genomic_DNA"/>
</dbReference>
<dbReference type="RefSeq" id="WP_011438606.1">
    <property type="nucleotide sequence ID" value="NZ_MSEA01000159.1"/>
</dbReference>
<dbReference type="SMR" id="Q2J545"/>
<dbReference type="STRING" id="106370.Francci3_4251"/>
<dbReference type="KEGG" id="fra:Francci3_4251"/>
<dbReference type="eggNOG" id="COG0215">
    <property type="taxonomic scope" value="Bacteria"/>
</dbReference>
<dbReference type="HOGENOM" id="CLU_013528_0_1_11"/>
<dbReference type="OrthoDB" id="9815130at2"/>
<dbReference type="PhylomeDB" id="Q2J545"/>
<dbReference type="Proteomes" id="UP000001937">
    <property type="component" value="Chromosome"/>
</dbReference>
<dbReference type="GO" id="GO:0005829">
    <property type="term" value="C:cytosol"/>
    <property type="evidence" value="ECO:0007669"/>
    <property type="project" value="TreeGrafter"/>
</dbReference>
<dbReference type="GO" id="GO:0005524">
    <property type="term" value="F:ATP binding"/>
    <property type="evidence" value="ECO:0007669"/>
    <property type="project" value="UniProtKB-UniRule"/>
</dbReference>
<dbReference type="GO" id="GO:0004817">
    <property type="term" value="F:cysteine-tRNA ligase activity"/>
    <property type="evidence" value="ECO:0007669"/>
    <property type="project" value="UniProtKB-UniRule"/>
</dbReference>
<dbReference type="GO" id="GO:0008270">
    <property type="term" value="F:zinc ion binding"/>
    <property type="evidence" value="ECO:0007669"/>
    <property type="project" value="UniProtKB-UniRule"/>
</dbReference>
<dbReference type="GO" id="GO:0006423">
    <property type="term" value="P:cysteinyl-tRNA aminoacylation"/>
    <property type="evidence" value="ECO:0007669"/>
    <property type="project" value="UniProtKB-UniRule"/>
</dbReference>
<dbReference type="CDD" id="cd00672">
    <property type="entry name" value="CysRS_core"/>
    <property type="match status" value="1"/>
</dbReference>
<dbReference type="Gene3D" id="1.20.120.1910">
    <property type="entry name" value="Cysteine-tRNA ligase, C-terminal anti-codon recognition domain"/>
    <property type="match status" value="1"/>
</dbReference>
<dbReference type="Gene3D" id="3.40.50.620">
    <property type="entry name" value="HUPs"/>
    <property type="match status" value="1"/>
</dbReference>
<dbReference type="HAMAP" id="MF_00041">
    <property type="entry name" value="Cys_tRNA_synth"/>
    <property type="match status" value="1"/>
</dbReference>
<dbReference type="InterPro" id="IPR015803">
    <property type="entry name" value="Cys-tRNA-ligase"/>
</dbReference>
<dbReference type="InterPro" id="IPR015273">
    <property type="entry name" value="Cys-tRNA-synt_Ia_DALR"/>
</dbReference>
<dbReference type="InterPro" id="IPR024909">
    <property type="entry name" value="Cys-tRNA/MSH_ligase"/>
</dbReference>
<dbReference type="InterPro" id="IPR056411">
    <property type="entry name" value="CysS_C"/>
</dbReference>
<dbReference type="InterPro" id="IPR014729">
    <property type="entry name" value="Rossmann-like_a/b/a_fold"/>
</dbReference>
<dbReference type="InterPro" id="IPR032678">
    <property type="entry name" value="tRNA-synt_1_cat_dom"/>
</dbReference>
<dbReference type="InterPro" id="IPR009080">
    <property type="entry name" value="tRNAsynth_Ia_anticodon-bd"/>
</dbReference>
<dbReference type="PANTHER" id="PTHR10890:SF30">
    <property type="entry name" value="CYSTEINE--TRNA LIGASE"/>
    <property type="match status" value="1"/>
</dbReference>
<dbReference type="PANTHER" id="PTHR10890">
    <property type="entry name" value="CYSTEINYL-TRNA SYNTHETASE"/>
    <property type="match status" value="1"/>
</dbReference>
<dbReference type="Pfam" id="PF23493">
    <property type="entry name" value="CysS_C"/>
    <property type="match status" value="1"/>
</dbReference>
<dbReference type="Pfam" id="PF01406">
    <property type="entry name" value="tRNA-synt_1e"/>
    <property type="match status" value="2"/>
</dbReference>
<dbReference type="PRINTS" id="PR00983">
    <property type="entry name" value="TRNASYNTHCYS"/>
</dbReference>
<dbReference type="SMART" id="SM00840">
    <property type="entry name" value="DALR_2"/>
    <property type="match status" value="1"/>
</dbReference>
<dbReference type="SUPFAM" id="SSF47323">
    <property type="entry name" value="Anticodon-binding domain of a subclass of class I aminoacyl-tRNA synthetases"/>
    <property type="match status" value="1"/>
</dbReference>
<dbReference type="SUPFAM" id="SSF52374">
    <property type="entry name" value="Nucleotidylyl transferase"/>
    <property type="match status" value="1"/>
</dbReference>
<accession>Q2J545</accession>
<gene>
    <name evidence="1" type="primary">cysS</name>
    <name type="ordered locus">Francci3_4251</name>
</gene>
<reference key="1">
    <citation type="journal article" date="2007" name="Genome Res.">
        <title>Genome characteristics of facultatively symbiotic Frankia sp. strains reflect host range and host plant biogeography.</title>
        <authorList>
            <person name="Normand P."/>
            <person name="Lapierre P."/>
            <person name="Tisa L.S."/>
            <person name="Gogarten J.P."/>
            <person name="Alloisio N."/>
            <person name="Bagnarol E."/>
            <person name="Bassi C.A."/>
            <person name="Berry A.M."/>
            <person name="Bickhart D.M."/>
            <person name="Choisne N."/>
            <person name="Couloux A."/>
            <person name="Cournoyer B."/>
            <person name="Cruveiller S."/>
            <person name="Daubin V."/>
            <person name="Demange N."/>
            <person name="Francino M.P."/>
            <person name="Goltsman E."/>
            <person name="Huang Y."/>
            <person name="Kopp O.R."/>
            <person name="Labarre L."/>
            <person name="Lapidus A."/>
            <person name="Lavire C."/>
            <person name="Marechal J."/>
            <person name="Martinez M."/>
            <person name="Mastronunzio J.E."/>
            <person name="Mullin B.C."/>
            <person name="Niemann J."/>
            <person name="Pujic P."/>
            <person name="Rawnsley T."/>
            <person name="Rouy Z."/>
            <person name="Schenowitz C."/>
            <person name="Sellstedt A."/>
            <person name="Tavares F."/>
            <person name="Tomkins J.P."/>
            <person name="Vallenet D."/>
            <person name="Valverde C."/>
            <person name="Wall L.G."/>
            <person name="Wang Y."/>
            <person name="Medigue C."/>
            <person name="Benson D.R."/>
        </authorList>
    </citation>
    <scope>NUCLEOTIDE SEQUENCE [LARGE SCALE GENOMIC DNA]</scope>
    <source>
        <strain>DSM 45818 / CECT 9043 / HFP020203 / CcI3</strain>
    </source>
</reference>
<proteinExistence type="inferred from homology"/>
<protein>
    <recommendedName>
        <fullName evidence="1">Cysteine--tRNA ligase</fullName>
        <ecNumber evidence="1">6.1.1.16</ecNumber>
    </recommendedName>
    <alternativeName>
        <fullName evidence="1">Cysteinyl-tRNA synthetase</fullName>
        <shortName evidence="1">CysRS</shortName>
    </alternativeName>
</protein>